<reference key="1">
    <citation type="submission" date="2007-07" db="EMBL/GenBank/DDBJ databases">
        <title>Genome sequence of Campylobacter curvus 525.92 isolated from human feces.</title>
        <authorList>
            <person name="Fouts D.E."/>
            <person name="Mongodin E.F."/>
            <person name="Puiu D."/>
            <person name="Sebastian Y."/>
            <person name="Miller W.G."/>
            <person name="Mandrell R.E."/>
            <person name="Lastovica A.J."/>
            <person name="Nelson K.E."/>
        </authorList>
    </citation>
    <scope>NUCLEOTIDE SEQUENCE [LARGE SCALE GENOMIC DNA]</scope>
    <source>
        <strain>525.92</strain>
    </source>
</reference>
<comment type="function">
    <text evidence="1">Part of the twin-arginine translocation (Tat) system that transports large folded proteins containing a characteristic twin-arginine motif in their signal peptide across membranes. TatA could form the protein-conducting channel of the Tat system.</text>
</comment>
<comment type="subunit">
    <text evidence="1">The Tat system comprises two distinct complexes: a TatABC complex, containing multiple copies of TatA, TatB and TatC subunits, and a separate TatA complex, containing only TatA subunits. Substrates initially bind to the TatABC complex, which probably triggers association of the separate TatA complex to form the active translocon.</text>
</comment>
<comment type="subcellular location">
    <subcellularLocation>
        <location evidence="1">Cell inner membrane</location>
        <topology evidence="1">Single-pass membrane protein</topology>
    </subcellularLocation>
</comment>
<comment type="similarity">
    <text evidence="1">Belongs to the TatA/E family.</text>
</comment>
<gene>
    <name evidence="1" type="primary">tatA</name>
    <name type="ordered locus">Ccur92_03620</name>
    <name type="ORF">CCV52592_1255</name>
</gene>
<organism>
    <name type="scientific">Campylobacter curvus (strain 525.92)</name>
    <dbReference type="NCBI Taxonomy" id="360105"/>
    <lineage>
        <taxon>Bacteria</taxon>
        <taxon>Pseudomonadati</taxon>
        <taxon>Campylobacterota</taxon>
        <taxon>Epsilonproteobacteria</taxon>
        <taxon>Campylobacterales</taxon>
        <taxon>Campylobacteraceae</taxon>
        <taxon>Campylobacter</taxon>
    </lineage>
</organism>
<protein>
    <recommendedName>
        <fullName evidence="1">Sec-independent protein translocase protein TatA</fullName>
    </recommendedName>
</protein>
<dbReference type="EMBL" id="CP000767">
    <property type="protein sequence ID" value="EAU00946.1"/>
    <property type="molecule type" value="Genomic_DNA"/>
</dbReference>
<dbReference type="RefSeq" id="WP_009651014.1">
    <property type="nucleotide sequence ID" value="NC_009715.2"/>
</dbReference>
<dbReference type="SMR" id="A7GWS4"/>
<dbReference type="STRING" id="360105.CCV52592_1255"/>
<dbReference type="GeneID" id="61001663"/>
<dbReference type="KEGG" id="ccv:CCV52592_1255"/>
<dbReference type="HOGENOM" id="CLU_086034_5_4_7"/>
<dbReference type="OrthoDB" id="9813726at2"/>
<dbReference type="Proteomes" id="UP000006380">
    <property type="component" value="Chromosome"/>
</dbReference>
<dbReference type="GO" id="GO:0033281">
    <property type="term" value="C:TAT protein transport complex"/>
    <property type="evidence" value="ECO:0007669"/>
    <property type="project" value="UniProtKB-UniRule"/>
</dbReference>
<dbReference type="GO" id="GO:0008320">
    <property type="term" value="F:protein transmembrane transporter activity"/>
    <property type="evidence" value="ECO:0007669"/>
    <property type="project" value="UniProtKB-UniRule"/>
</dbReference>
<dbReference type="GO" id="GO:0043953">
    <property type="term" value="P:protein transport by the Tat complex"/>
    <property type="evidence" value="ECO:0007669"/>
    <property type="project" value="UniProtKB-UniRule"/>
</dbReference>
<dbReference type="Gene3D" id="1.20.5.3310">
    <property type="match status" value="1"/>
</dbReference>
<dbReference type="HAMAP" id="MF_00236">
    <property type="entry name" value="TatA_E"/>
    <property type="match status" value="1"/>
</dbReference>
<dbReference type="InterPro" id="IPR003369">
    <property type="entry name" value="TatA/B/E"/>
</dbReference>
<dbReference type="InterPro" id="IPR006312">
    <property type="entry name" value="TatA/E"/>
</dbReference>
<dbReference type="NCBIfam" id="TIGR01411">
    <property type="entry name" value="tatAE"/>
    <property type="match status" value="1"/>
</dbReference>
<dbReference type="PANTHER" id="PTHR42982">
    <property type="entry name" value="SEC-INDEPENDENT PROTEIN TRANSLOCASE PROTEIN TATA"/>
    <property type="match status" value="1"/>
</dbReference>
<dbReference type="PANTHER" id="PTHR42982:SF1">
    <property type="entry name" value="SEC-INDEPENDENT PROTEIN TRANSLOCASE PROTEIN TATA"/>
    <property type="match status" value="1"/>
</dbReference>
<dbReference type="Pfam" id="PF02416">
    <property type="entry name" value="TatA_B_E"/>
    <property type="match status" value="1"/>
</dbReference>
<evidence type="ECO:0000255" key="1">
    <source>
        <dbReference type="HAMAP-Rule" id="MF_00236"/>
    </source>
</evidence>
<keyword id="KW-0997">Cell inner membrane</keyword>
<keyword id="KW-1003">Cell membrane</keyword>
<keyword id="KW-0472">Membrane</keyword>
<keyword id="KW-0653">Protein transport</keyword>
<keyword id="KW-1185">Reference proteome</keyword>
<keyword id="KW-0811">Translocation</keyword>
<keyword id="KW-0812">Transmembrane</keyword>
<keyword id="KW-1133">Transmembrane helix</keyword>
<keyword id="KW-0813">Transport</keyword>
<feature type="chain" id="PRO_0000336624" description="Sec-independent protein translocase protein TatA">
    <location>
        <begin position="1"/>
        <end position="70"/>
    </location>
</feature>
<feature type="transmembrane region" description="Helical" evidence="1">
    <location>
        <begin position="1"/>
        <end position="21"/>
    </location>
</feature>
<name>TATA_CAMC5</name>
<sequence>MAIGVNQLLIILVIIVLLFGAKKIPELAKGLGKGIKSFKAEMEDDKPIEKVEKKGDDVVDAKVEETTKNA</sequence>
<proteinExistence type="inferred from homology"/>
<accession>A7GWS4</accession>